<dbReference type="EMBL" id="AF398465">
    <property type="protein sequence ID" value="AAM73758.1"/>
    <property type="molecule type" value="mRNA"/>
</dbReference>
<dbReference type="EMBL" id="AF389425">
    <property type="protein sequence ID" value="AAK64497.1"/>
    <property type="molecule type" value="mRNA"/>
</dbReference>
<dbReference type="EMBL" id="U52104">
    <property type="protein sequence ID" value="AAB03282.1"/>
    <property type="molecule type" value="mRNA"/>
</dbReference>
<dbReference type="RefSeq" id="NP_001385485.1">
    <molecule id="Q62952-2"/>
    <property type="nucleotide sequence ID" value="NM_001398556.2"/>
</dbReference>
<dbReference type="RefSeq" id="NP_037066.1">
    <molecule id="Q62952-1"/>
    <property type="nucleotide sequence ID" value="NM_012934.3"/>
</dbReference>
<dbReference type="RefSeq" id="XP_006254732.1">
    <property type="nucleotide sequence ID" value="XM_006254670.3"/>
</dbReference>
<dbReference type="SMR" id="Q62952"/>
<dbReference type="BioGRID" id="247453">
    <property type="interactions" value="2"/>
</dbReference>
<dbReference type="FunCoup" id="Q62952">
    <property type="interactions" value="940"/>
</dbReference>
<dbReference type="IntAct" id="Q62952">
    <property type="interactions" value="3"/>
</dbReference>
<dbReference type="MINT" id="Q62952"/>
<dbReference type="STRING" id="10116.ENSRNOP00000025880"/>
<dbReference type="MEROPS" id="M38.976"/>
<dbReference type="GlyGen" id="Q62952">
    <property type="glycosylation" value="2 sites, 1 O-linked glycan (1 site)"/>
</dbReference>
<dbReference type="iPTMnet" id="Q62952"/>
<dbReference type="PhosphoSitePlus" id="Q62952"/>
<dbReference type="jPOST" id="Q62952"/>
<dbReference type="PaxDb" id="10116-ENSRNOP00000025880"/>
<dbReference type="Ensembl" id="ENSRNOT00000025880.6">
    <molecule id="Q62952-2"/>
    <property type="protein sequence ID" value="ENSRNOP00000025880.2"/>
    <property type="gene ID" value="ENSRNOG00000018992.8"/>
</dbReference>
<dbReference type="Ensembl" id="ENSRNOT00000087876.2">
    <molecule id="Q62952-1"/>
    <property type="protein sequence ID" value="ENSRNOP00000070679.1"/>
    <property type="gene ID" value="ENSRNOG00000018992.8"/>
</dbReference>
<dbReference type="GeneID" id="25418"/>
<dbReference type="KEGG" id="rno:25418"/>
<dbReference type="UCSC" id="RGD:2410">
    <molecule id="Q62952-1"/>
    <property type="organism name" value="rat"/>
</dbReference>
<dbReference type="AGR" id="RGD:2410"/>
<dbReference type="CTD" id="1809"/>
<dbReference type="RGD" id="2410">
    <property type="gene designation" value="Dpysl3"/>
</dbReference>
<dbReference type="eggNOG" id="KOG2584">
    <property type="taxonomic scope" value="Eukaryota"/>
</dbReference>
<dbReference type="GeneTree" id="ENSGT01030000234527"/>
<dbReference type="InParanoid" id="Q62952"/>
<dbReference type="OMA" id="WVTAEVT"/>
<dbReference type="PhylomeDB" id="Q62952"/>
<dbReference type="TreeFam" id="TF314706"/>
<dbReference type="Reactome" id="R-RNO-399956">
    <property type="pathway name" value="CRMPs in Sema3A signaling"/>
</dbReference>
<dbReference type="PRO" id="PR:Q62952"/>
<dbReference type="Proteomes" id="UP000002494">
    <property type="component" value="Chromosome 18"/>
</dbReference>
<dbReference type="Bgee" id="ENSRNOG00000018992">
    <property type="expression patterns" value="Expressed in testis and 19 other cell types or tissues"/>
</dbReference>
<dbReference type="GO" id="GO:0044297">
    <property type="term" value="C:cell body"/>
    <property type="evidence" value="ECO:0000314"/>
    <property type="project" value="UniProtKB"/>
</dbReference>
<dbReference type="GO" id="GO:0005829">
    <property type="term" value="C:cytosol"/>
    <property type="evidence" value="ECO:0000314"/>
    <property type="project" value="UniProtKB"/>
</dbReference>
<dbReference type="GO" id="GO:0070382">
    <property type="term" value="C:exocytic vesicle"/>
    <property type="evidence" value="ECO:0000314"/>
    <property type="project" value="RGD"/>
</dbReference>
<dbReference type="GO" id="GO:0005615">
    <property type="term" value="C:extracellular space"/>
    <property type="evidence" value="ECO:0000314"/>
    <property type="project" value="RGD"/>
</dbReference>
<dbReference type="GO" id="GO:0031941">
    <property type="term" value="C:filamentous actin"/>
    <property type="evidence" value="ECO:0000314"/>
    <property type="project" value="UniProtKB"/>
</dbReference>
<dbReference type="GO" id="GO:0030426">
    <property type="term" value="C:growth cone"/>
    <property type="evidence" value="ECO:0000314"/>
    <property type="project" value="UniProtKB"/>
</dbReference>
<dbReference type="GO" id="GO:0030027">
    <property type="term" value="C:lamellipodium"/>
    <property type="evidence" value="ECO:0000314"/>
    <property type="project" value="UniProtKB"/>
</dbReference>
<dbReference type="GO" id="GO:0045202">
    <property type="term" value="C:synapse"/>
    <property type="evidence" value="ECO:0000314"/>
    <property type="project" value="SynGO"/>
</dbReference>
<dbReference type="GO" id="GO:0035374">
    <property type="term" value="F:chondroitin sulfate binding"/>
    <property type="evidence" value="ECO:0000314"/>
    <property type="project" value="RGD"/>
</dbReference>
<dbReference type="GO" id="GO:0031005">
    <property type="term" value="F:filamin binding"/>
    <property type="evidence" value="ECO:0000266"/>
    <property type="project" value="RGD"/>
</dbReference>
<dbReference type="GO" id="GO:0016812">
    <property type="term" value="F:hydrolase activity, acting on carbon-nitrogen (but not peptide) bonds, in cyclic amides"/>
    <property type="evidence" value="ECO:0000318"/>
    <property type="project" value="GO_Central"/>
</dbReference>
<dbReference type="GO" id="GO:0042802">
    <property type="term" value="F:identical protein binding"/>
    <property type="evidence" value="ECO:0000353"/>
    <property type="project" value="UniProtKB"/>
</dbReference>
<dbReference type="GO" id="GO:0051219">
    <property type="term" value="F:phosphoprotein binding"/>
    <property type="evidence" value="ECO:0000266"/>
    <property type="project" value="RGD"/>
</dbReference>
<dbReference type="GO" id="GO:0017124">
    <property type="term" value="F:SH3 domain binding"/>
    <property type="evidence" value="ECO:0000314"/>
    <property type="project" value="RGD"/>
</dbReference>
<dbReference type="GO" id="GO:0051764">
    <property type="term" value="P:actin crosslink formation"/>
    <property type="evidence" value="ECO:0000314"/>
    <property type="project" value="UniProtKB"/>
</dbReference>
<dbReference type="GO" id="GO:0051017">
    <property type="term" value="P:actin filament bundle assembly"/>
    <property type="evidence" value="ECO:0000314"/>
    <property type="project" value="UniProtKB"/>
</dbReference>
<dbReference type="GO" id="GO:0071345">
    <property type="term" value="P:cellular response to cytokine stimulus"/>
    <property type="evidence" value="ECO:0000270"/>
    <property type="project" value="UniProtKB"/>
</dbReference>
<dbReference type="GO" id="GO:0030336">
    <property type="term" value="P:negative regulation of cell migration"/>
    <property type="evidence" value="ECO:0000315"/>
    <property type="project" value="UniProtKB"/>
</dbReference>
<dbReference type="GO" id="GO:0010977">
    <property type="term" value="P:negative regulation of neuron projection development"/>
    <property type="evidence" value="ECO:0000315"/>
    <property type="project" value="UniProtKB"/>
</dbReference>
<dbReference type="GO" id="GO:0007399">
    <property type="term" value="P:nervous system development"/>
    <property type="evidence" value="ECO:0000266"/>
    <property type="project" value="RGD"/>
</dbReference>
<dbReference type="GO" id="GO:0048666">
    <property type="term" value="P:neuron development"/>
    <property type="evidence" value="ECO:0000270"/>
    <property type="project" value="RGD"/>
</dbReference>
<dbReference type="GO" id="GO:0051491">
    <property type="term" value="P:positive regulation of filopodium assembly"/>
    <property type="evidence" value="ECO:0000314"/>
    <property type="project" value="UniProtKB"/>
</dbReference>
<dbReference type="GO" id="GO:0010976">
    <property type="term" value="P:positive regulation of neuron projection development"/>
    <property type="evidence" value="ECO:0000314"/>
    <property type="project" value="RGD"/>
</dbReference>
<dbReference type="GO" id="GO:0048678">
    <property type="term" value="P:response to axon injury"/>
    <property type="evidence" value="ECO:0000270"/>
    <property type="project" value="UniProtKB"/>
</dbReference>
<dbReference type="CDD" id="cd01314">
    <property type="entry name" value="D-HYD"/>
    <property type="match status" value="1"/>
</dbReference>
<dbReference type="FunFam" id="2.30.40.10:FF:000021">
    <property type="entry name" value="Dihydropyrimidinase-related protein 2"/>
    <property type="match status" value="1"/>
</dbReference>
<dbReference type="FunFam" id="3.20.20.140:FF:000174">
    <property type="entry name" value="Dihydropyrimidinase-related protein 2"/>
    <property type="match status" value="1"/>
</dbReference>
<dbReference type="Gene3D" id="3.20.20.140">
    <property type="entry name" value="Metal-dependent hydrolases"/>
    <property type="match status" value="1"/>
</dbReference>
<dbReference type="Gene3D" id="2.30.40.10">
    <property type="entry name" value="Urease, subunit C, domain 1"/>
    <property type="match status" value="1"/>
</dbReference>
<dbReference type="InterPro" id="IPR006680">
    <property type="entry name" value="Amidohydro-rel"/>
</dbReference>
<dbReference type="InterPro" id="IPR011778">
    <property type="entry name" value="Hydantoinase/dihydroPyrase"/>
</dbReference>
<dbReference type="InterPro" id="IPR011059">
    <property type="entry name" value="Metal-dep_hydrolase_composite"/>
</dbReference>
<dbReference type="InterPro" id="IPR032466">
    <property type="entry name" value="Metal_Hydrolase"/>
</dbReference>
<dbReference type="InterPro" id="IPR050378">
    <property type="entry name" value="Metallo-dep_Hydrolases_sf"/>
</dbReference>
<dbReference type="NCBIfam" id="TIGR02033">
    <property type="entry name" value="D-hydantoinase"/>
    <property type="match status" value="1"/>
</dbReference>
<dbReference type="PANTHER" id="PTHR11647:SF57">
    <property type="entry name" value="DIHYDROPYRIMIDINASE-RELATED PROTEIN 3"/>
    <property type="match status" value="1"/>
</dbReference>
<dbReference type="PANTHER" id="PTHR11647">
    <property type="entry name" value="HYDRANTOINASE/DIHYDROPYRIMIDINASE FAMILY MEMBER"/>
    <property type="match status" value="1"/>
</dbReference>
<dbReference type="Pfam" id="PF01979">
    <property type="entry name" value="Amidohydro_1"/>
    <property type="match status" value="1"/>
</dbReference>
<dbReference type="SUPFAM" id="SSF51338">
    <property type="entry name" value="Composite domain of metallo-dependent hydrolases"/>
    <property type="match status" value="2"/>
</dbReference>
<dbReference type="SUPFAM" id="SSF51556">
    <property type="entry name" value="Metallo-dependent hydrolases"/>
    <property type="match status" value="1"/>
</dbReference>
<keyword id="KW-0025">Alternative splicing</keyword>
<keyword id="KW-0966">Cell projection</keyword>
<keyword id="KW-0963">Cytoplasm</keyword>
<keyword id="KW-0903">Direct protein sequencing</keyword>
<keyword id="KW-0597">Phosphoprotein</keyword>
<keyword id="KW-1185">Reference proteome</keyword>
<organism>
    <name type="scientific">Rattus norvegicus</name>
    <name type="common">Rat</name>
    <dbReference type="NCBI Taxonomy" id="10116"/>
    <lineage>
        <taxon>Eukaryota</taxon>
        <taxon>Metazoa</taxon>
        <taxon>Chordata</taxon>
        <taxon>Craniata</taxon>
        <taxon>Vertebrata</taxon>
        <taxon>Euteleostomi</taxon>
        <taxon>Mammalia</taxon>
        <taxon>Eutheria</taxon>
        <taxon>Euarchontoglires</taxon>
        <taxon>Glires</taxon>
        <taxon>Rodentia</taxon>
        <taxon>Myomorpha</taxon>
        <taxon>Muroidea</taxon>
        <taxon>Muridae</taxon>
        <taxon>Murinae</taxon>
        <taxon>Rattus</taxon>
    </lineage>
</organism>
<accession>Q62952</accession>
<accession>Q8K4H3</accession>
<accession>Q91XM8</accession>
<feature type="chain" id="PRO_0000165919" description="Dihydropyrimidinase-related protein 3">
    <location>
        <begin position="1"/>
        <end position="570"/>
    </location>
</feature>
<feature type="region of interest" description="Disordered" evidence="4">
    <location>
        <begin position="506"/>
        <end position="570"/>
    </location>
</feature>
<feature type="compositionally biased region" description="Polar residues" evidence="4">
    <location>
        <begin position="506"/>
        <end position="524"/>
    </location>
</feature>
<feature type="compositionally biased region" description="Polar residues" evidence="4">
    <location>
        <begin position="533"/>
        <end position="544"/>
    </location>
</feature>
<feature type="modified residue" description="Phosphoserine" evidence="2">
    <location>
        <position position="259"/>
    </location>
</feature>
<feature type="modified residue" description="Phosphotyrosine" evidence="3">
    <location>
        <position position="431"/>
    </location>
</feature>
<feature type="modified residue" description="Phosphotyrosine" evidence="3">
    <location>
        <position position="499"/>
    </location>
</feature>
<feature type="modified residue" description="Phosphothreonine" evidence="10">
    <location>
        <position position="509"/>
    </location>
</feature>
<feature type="modified residue" description="Phosphothreonine" evidence="10">
    <location>
        <position position="514"/>
    </location>
</feature>
<feature type="modified residue" description="Phosphoserine; by GSK3" evidence="2">
    <location>
        <position position="518"/>
    </location>
</feature>
<feature type="modified residue" description="Phosphoserine" evidence="10">
    <location>
        <position position="522"/>
    </location>
</feature>
<feature type="modified residue" description="Phosphoserine" evidence="3">
    <location>
        <position position="536"/>
    </location>
</feature>
<feature type="modified residue" description="Phosphoserine" evidence="3">
    <location>
        <position position="539"/>
    </location>
</feature>
<feature type="modified residue" description="Phosphoserine" evidence="3">
    <location>
        <position position="541"/>
    </location>
</feature>
<feature type="modified residue" description="Phosphothreonine" evidence="3">
    <location>
        <position position="543"/>
    </location>
</feature>
<feature type="splice variant" id="VSP_016557" description="In isoform 2." evidence="8">
    <original>MSYQGKKNIPRIT</original>
    <variation>MASGRRGWDSSHEDDLPVYLARPGTTDQVPRQKYGGMFCNVEGAFESKTLDFDALSVGQRGAKTPRSSQGSGRGAGNRPGVEGDTRRGPGREESREPVPESPKPAGVEIRSATGKEVLQNLGPKDK</variation>
    <location>
        <begin position="1"/>
        <end position="13"/>
    </location>
</feature>
<feature type="modified residue" description="Phosphoserine" evidence="10">
    <location sequence="Q62952-2">
        <position position="101"/>
    </location>
</feature>
<gene>
    <name type="primary">Dpysl3</name>
    <name type="synonym">Crmp4</name>
</gene>
<evidence type="ECO:0000250" key="1"/>
<evidence type="ECO:0000250" key="2">
    <source>
        <dbReference type="UniProtKB" id="Q14195"/>
    </source>
</evidence>
<evidence type="ECO:0000250" key="3">
    <source>
        <dbReference type="UniProtKB" id="Q62188"/>
    </source>
</evidence>
<evidence type="ECO:0000256" key="4">
    <source>
        <dbReference type="SAM" id="MobiDB-lite"/>
    </source>
</evidence>
<evidence type="ECO:0000269" key="5">
    <source>
    </source>
</evidence>
<evidence type="ECO:0000269" key="6">
    <source>
    </source>
</evidence>
<evidence type="ECO:0000269" key="7">
    <source>
    </source>
</evidence>
<evidence type="ECO:0000303" key="8">
    <source>
    </source>
</evidence>
<evidence type="ECO:0000305" key="9"/>
<evidence type="ECO:0007744" key="10">
    <source>
    </source>
</evidence>
<comment type="function">
    <text evidence="5">Necessary for signaling by class 3 semaphorins and subsequent remodeling of the cytoskeleton. Plays a role in axon guidance, neuronal growth cone collapse and cell migration.</text>
</comment>
<comment type="subunit">
    <text evidence="2 5 7">Homotetramer, and heterotetramer with CRMP1, DPYSL2, DPYSL4 or DPYSL5 (PubMed:9375656). Interacts with synaptic vesicle protein 2 and SH3A domain of intersectin (PubMed:12684468). Interacts with FLNA (By similarity).</text>
</comment>
<comment type="subcellular location">
    <subcellularLocation>
        <location evidence="6">Cytoplasm</location>
    </subcellularLocation>
    <subcellularLocation>
        <location evidence="5">Cell projection</location>
        <location evidence="5">Growth cone</location>
    </subcellularLocation>
    <text evidence="5">Colocalizes with synaptic vesicle protein 2 in the central region of the growth cone.</text>
</comment>
<comment type="alternative products">
    <event type="alternative splicing"/>
    <isoform>
        <id>Q62952-1</id>
        <name>1</name>
        <name>TUC-4b</name>
        <sequence type="displayed"/>
    </isoform>
    <isoform>
        <id>Q62952-2</id>
        <name>2</name>
        <name>TUC-4a</name>
        <sequence type="described" ref="VSP_016557"/>
    </isoform>
</comment>
<comment type="tissue specificity">
    <text evidence="5">Isoform 2 is expressed in growth cones. Up-regulated in motor neurons during axonal regeneration after sciatic nerve lesion. Overexpression of isoform 2 increased neurite extension and branching. Isoform 1 is expressed throughout neurons and their axons.</text>
</comment>
<comment type="developmental stage">
    <text evidence="5">At 17 dpc, isoform 2 is expressed in the CNS and PNS. Isoform 2 is expressed at high levels in the dorsal root ganglia, trigeminal ganglia, and throughout the spinal cord with the highest level in the ventral horn.</text>
</comment>
<comment type="PTM">
    <text evidence="1">Phosphorylation on Ser-522 by DYRK2 promotes subsequent phosphorylation on Thr-509, Thr-514 and Ser-518 by GSK3.</text>
</comment>
<comment type="similarity">
    <text evidence="9">Belongs to the metallo-dependent hydrolases superfamily. Hydantoinase/dihydropyrimidinase family.</text>
</comment>
<comment type="caution">
    <text evidence="9">Lacks most of the conserved residues that are essential for binding the metal cofactor and hence for dihydropyrimidinase activity. Its enzyme activity is therefore unsure.</text>
</comment>
<sequence>MSYQGKKNIPRITSDRLLIKGGRIVNDDQSFYADIYMEDGLIKQIGDNLIVPGGVKTIEANGKMVMPGGIDVHTHFQMPYKGMTTVDDFFQGTKAALAGGTTMIIDHVVPEPESSLTEAYEKWREWADGKSCCDYALHVDITHWNDSVKQEVQNLSKEKGVNSFMVYMAYKDLYQVSNTELYEIFTCLGELGAIAQVHAENGDIIAQEQARMLEMGITGPEGHVLSRPEELEAEAVFRAITVASQTNCPLYVTKVMSKSAADLISQARKKGNVVFGEPITASLGIDGTHYWSKNWAKAAAFVTSPPLSPDPTTPDYINSLLASGDLQLSGSAHCTFSTAQKAIGKDNFTAIPEGTNGVEERMSVIWDKAVATGKMDENQFVAVTSTNAAKIFNLYPRKGRIAVGSDSDLVIWDPDAVKIVSAKNHQSVAEYNIFEGMELRGAPLVVICQGKIMLEDGNLHVTQGAGRFIPCSPFSDYVYKRIKARRKMADLHAVPRGMYDGPVFDLTTTPKGGTPAGSTRGSPTRPNPPVRNLHQSGFSLSGTQVDEGVRSASKRIVAPPGGRSNITSLS</sequence>
<proteinExistence type="evidence at protein level"/>
<name>DPYL3_RAT</name>
<reference key="1">
    <citation type="journal article" date="2003" name="J. Neurosci.">
        <title>TUC-4b, a novel TUC family variant, regulates neurite outgrowth and associates with vesicles in the growth cone.</title>
        <authorList>
            <person name="Quinn C.C."/>
            <person name="Chen E."/>
            <person name="Kinjo T.G."/>
            <person name="Kelly G."/>
            <person name="Bell A.W."/>
            <person name="Elliott R.C."/>
            <person name="McPherson P.S."/>
            <person name="Hockfield S."/>
        </authorList>
    </citation>
    <scope>NUCLEOTIDE SEQUENCE [MRNA] (ISOFORM 2)</scope>
    <scope>FUNCTION</scope>
    <scope>SUBCELLULAR LOCATION</scope>
    <scope>DEVELOPMENTAL STAGE</scope>
    <scope>TISSUE SPECIFICITY</scope>
    <scope>ALTERNATIVE SPLICING</scope>
    <scope>INTERACTION WITH SYNAPTIC VESICLE PROTEIN 2 AND INTERSECTIN</scope>
    <source>
        <strain>Sprague-Dawley</strain>
    </source>
</reference>
<reference key="2">
    <citation type="submission" date="2001-06" db="EMBL/GenBank/DDBJ databases">
        <title>Adult-specific collapsin response mediator protein 4 (CRMP4) transcripts correlate with widespread CRMP4 expression in normal and epileptic adult rats.</title>
        <authorList>
            <person name="Elliott R.C."/>
            <person name="Parent J.M."/>
            <person name="Lowenstein D.H."/>
        </authorList>
    </citation>
    <scope>NUCLEOTIDE SEQUENCE [MRNA] (ISOFORM 1)</scope>
    <source>
        <strain>Sprague-Dawley</strain>
        <tissue>Hippocampus</tissue>
    </source>
</reference>
<reference key="3">
    <citation type="journal article" date="1996" name="J. Neurosci.">
        <title>A family of rat CRMP genes is differentially expressed in the nervous system.</title>
        <authorList>
            <person name="Wang L."/>
            <person name="Strittmatter S.M."/>
        </authorList>
    </citation>
    <scope>NUCLEOTIDE SEQUENCE [MRNA] OF 1-358 (ISOFORM 1)</scope>
    <source>
        <tissue>Brain</tissue>
    </source>
</reference>
<reference key="4">
    <citation type="submission" date="2007-04" db="UniProtKB">
        <authorList>
            <person name="Lubec G."/>
            <person name="Diao W."/>
        </authorList>
    </citation>
    <scope>PROTEIN SEQUENCE OF 532-550</scope>
    <scope>IDENTIFICATION BY MASS SPECTROMETRY</scope>
    <source>
        <strain>Sprague-Dawley</strain>
        <tissue>Hippocampus</tissue>
    </source>
</reference>
<reference key="5">
    <citation type="journal article" date="1997" name="J. Neurochem.">
        <title>Brain CRMP forms heterotetramers similar to liver dihydropyrimidinase.</title>
        <authorList>
            <person name="Wang L.H."/>
            <person name="Strittmatter S.M."/>
        </authorList>
    </citation>
    <scope>SUBUNIT</scope>
</reference>
<reference key="6">
    <citation type="journal article" date="2009" name="Proteomics">
        <title>Proteome profile of the mature rat olfactory bulb.</title>
        <authorList>
            <person name="Maurya D.K."/>
            <person name="Sundaram C.S."/>
            <person name="Bhargava P."/>
        </authorList>
    </citation>
    <scope>IDENTIFICATION BY MASS SPECTROMETRY</scope>
    <scope>SUBCELLULAR LOCATION</scope>
</reference>
<reference key="7">
    <citation type="journal article" date="2012" name="Nat. Commun.">
        <title>Quantitative maps of protein phosphorylation sites across 14 different rat organs and tissues.</title>
        <authorList>
            <person name="Lundby A."/>
            <person name="Secher A."/>
            <person name="Lage K."/>
            <person name="Nordsborg N.B."/>
            <person name="Dmytriyev A."/>
            <person name="Lundby C."/>
            <person name="Olsen J.V."/>
        </authorList>
    </citation>
    <scope>PHOSPHORYLATION [LARGE SCALE ANALYSIS] AT THR-509; THR-514 AND SER-522</scope>
    <scope>PHOSPHORYLATION [LARGE SCALE ANALYSIS] AT SER-101 (ISOFORM 2)</scope>
    <scope>IDENTIFICATION BY MASS SPECTROMETRY [LARGE SCALE ANALYSIS]</scope>
</reference>
<protein>
    <recommendedName>
        <fullName>Dihydropyrimidinase-related protein 3</fullName>
        <shortName>DRP-3</shortName>
    </recommendedName>
    <alternativeName>
        <fullName>Collapsin response mediator protein 4</fullName>
        <shortName>CRMP-4</shortName>
    </alternativeName>
    <alternativeName>
        <fullName>TOAD-64/Ulip/CRMP</fullName>
    </alternativeName>
    <alternativeName>
        <fullName>TUC-4b</fullName>
    </alternativeName>
</protein>